<organism>
    <name type="scientific">Methanococcus vannielii (strain ATCC 35089 / DSM 1224 / JCM 13029 / OCM 148 / SB)</name>
    <dbReference type="NCBI Taxonomy" id="406327"/>
    <lineage>
        <taxon>Archaea</taxon>
        <taxon>Methanobacteriati</taxon>
        <taxon>Methanobacteriota</taxon>
        <taxon>Methanomada group</taxon>
        <taxon>Methanococci</taxon>
        <taxon>Methanococcales</taxon>
        <taxon>Methanococcaceae</taxon>
        <taxon>Methanococcus</taxon>
    </lineage>
</organism>
<proteinExistence type="inferred from homology"/>
<gene>
    <name evidence="1" type="primary">aroB'</name>
    <name type="ordered locus">Mevan_1215</name>
</gene>
<dbReference type="EC" id="1.4.1.24" evidence="1"/>
<dbReference type="EMBL" id="CP000742">
    <property type="protein sequence ID" value="ABR55113.1"/>
    <property type="molecule type" value="Genomic_DNA"/>
</dbReference>
<dbReference type="RefSeq" id="WP_012066028.1">
    <property type="nucleotide sequence ID" value="NC_009634.1"/>
</dbReference>
<dbReference type="STRING" id="406327.Mevan_1215"/>
<dbReference type="GeneID" id="5325762"/>
<dbReference type="KEGG" id="mvn:Mevan_1215"/>
<dbReference type="eggNOG" id="arCOG04353">
    <property type="taxonomic scope" value="Archaea"/>
</dbReference>
<dbReference type="HOGENOM" id="CLU_056379_0_0_2"/>
<dbReference type="OrthoDB" id="10265at2157"/>
<dbReference type="Proteomes" id="UP000001107">
    <property type="component" value="Chromosome"/>
</dbReference>
<dbReference type="GO" id="GO:0003856">
    <property type="term" value="F:3-dehydroquinate synthase activity"/>
    <property type="evidence" value="ECO:0007669"/>
    <property type="project" value="InterPro"/>
</dbReference>
<dbReference type="GO" id="GO:0102042">
    <property type="term" value="F:dehydroquinate synthase activity"/>
    <property type="evidence" value="ECO:0007669"/>
    <property type="project" value="UniProtKB-EC"/>
</dbReference>
<dbReference type="GO" id="GO:0051287">
    <property type="term" value="F:NAD binding"/>
    <property type="evidence" value="ECO:0007669"/>
    <property type="project" value="UniProtKB-UniRule"/>
</dbReference>
<dbReference type="GO" id="GO:0008652">
    <property type="term" value="P:amino acid biosynthetic process"/>
    <property type="evidence" value="ECO:0007669"/>
    <property type="project" value="UniProtKB-KW"/>
</dbReference>
<dbReference type="GO" id="GO:0009073">
    <property type="term" value="P:aromatic amino acid family biosynthetic process"/>
    <property type="evidence" value="ECO:0007669"/>
    <property type="project" value="UniProtKB-UniRule"/>
</dbReference>
<dbReference type="HAMAP" id="MF_01244">
    <property type="entry name" value="Arch_DHQ_synthase"/>
    <property type="match status" value="1"/>
</dbReference>
<dbReference type="InterPro" id="IPR002812">
    <property type="entry name" value="DHQ_synth"/>
</dbReference>
<dbReference type="NCBIfam" id="NF002624">
    <property type="entry name" value="PRK02290.1-2"/>
    <property type="match status" value="1"/>
</dbReference>
<dbReference type="PANTHER" id="PTHR33563">
    <property type="match status" value="1"/>
</dbReference>
<dbReference type="PANTHER" id="PTHR33563:SF1">
    <property type="entry name" value="3-DEHYDROQUINATE SYNTHASE"/>
    <property type="match status" value="1"/>
</dbReference>
<dbReference type="Pfam" id="PF01959">
    <property type="entry name" value="DHQS"/>
    <property type="match status" value="1"/>
</dbReference>
<dbReference type="PIRSF" id="PIRSF006655">
    <property type="entry name" value="DHQ_synth"/>
    <property type="match status" value="1"/>
</dbReference>
<protein>
    <recommendedName>
        <fullName evidence="1">3-dehydroquinate synthase</fullName>
        <shortName evidence="1">DHQ synthase</shortName>
        <ecNumber evidence="1">1.4.1.24</ecNumber>
    </recommendedName>
    <alternativeName>
        <fullName evidence="1">3-dehydroquinate synthase II</fullName>
    </alternativeName>
</protein>
<name>DHQS_METVS</name>
<keyword id="KW-0028">Amino-acid biosynthesis</keyword>
<keyword id="KW-0057">Aromatic amino acid biosynthesis</keyword>
<keyword id="KW-0520">NAD</keyword>
<keyword id="KW-0560">Oxidoreductase</keyword>
<sequence length="361" mass="40290">MKFGWIMSSSSDIEERKDTVKDSLESSIPAIIVKKDEISTVRELGSIEIISDSLDADIVLVTKKDDLDILKSAKDSGKKTCVYITIETKEDEIYATKVSRLDFVDYIILEGKDWTIIPLENIIADLFNEDIKIVSLVNNVNDAKAAYEILEKGVDGVVLVPKDINEVKEFSKLIDSMNFENVALDYAVIKKIEPVGSGDRVCIDTCSIMEIGEGMLIGSYSRGMFLVHSESVENPYVATRPFRVNAGPVHAYILCPENKTKYLSDLKAGDKVLIVNKDGKTRETVIGRIKIEKRPLFLVEAEYNGEILRTILQNAETIRLVSDEGKPISVVDLKEGLKVLIKPDENARHFGMAINESIIEK</sequence>
<reference key="1">
    <citation type="submission" date="2007-06" db="EMBL/GenBank/DDBJ databases">
        <title>Complete sequence of Methanococcus vannielii SB.</title>
        <authorList>
            <consortium name="US DOE Joint Genome Institute"/>
            <person name="Copeland A."/>
            <person name="Lucas S."/>
            <person name="Lapidus A."/>
            <person name="Barry K."/>
            <person name="Glavina del Rio T."/>
            <person name="Dalin E."/>
            <person name="Tice H."/>
            <person name="Pitluck S."/>
            <person name="Chain P."/>
            <person name="Malfatti S."/>
            <person name="Shin M."/>
            <person name="Vergez L."/>
            <person name="Schmutz J."/>
            <person name="Larimer F."/>
            <person name="Land M."/>
            <person name="Hauser L."/>
            <person name="Kyrpides N."/>
            <person name="Anderson I."/>
            <person name="Sieprawska-Lupa M."/>
            <person name="Whitman W.B."/>
            <person name="Richardson P."/>
        </authorList>
    </citation>
    <scope>NUCLEOTIDE SEQUENCE [LARGE SCALE GENOMIC DNA]</scope>
    <source>
        <strain>ATCC 35089 / DSM 1224 / JCM 13029 / OCM 148 / SB</strain>
    </source>
</reference>
<evidence type="ECO:0000255" key="1">
    <source>
        <dbReference type="HAMAP-Rule" id="MF_01244"/>
    </source>
</evidence>
<accession>A6URJ1</accession>
<comment type="function">
    <text evidence="1">Catalyzes the oxidative deamination and cyclization of 2-amino-3,7-dideoxy-D-threo-hept-6-ulosonic acid (ADH) to yield 3-dehydroquinate (DHQ), which is fed into the canonical shikimic pathway of aromatic amino acid biosynthesis.</text>
</comment>
<comment type="catalytic activity">
    <reaction evidence="1">
        <text>2-amino-2,3,7-trideoxy-D-lyxo-hept-6-ulosonate + NAD(+) + H2O = 3-dehydroquinate + NH4(+) + NADH + H(+)</text>
        <dbReference type="Rhea" id="RHEA:25956"/>
        <dbReference type="ChEBI" id="CHEBI:15377"/>
        <dbReference type="ChEBI" id="CHEBI:15378"/>
        <dbReference type="ChEBI" id="CHEBI:28938"/>
        <dbReference type="ChEBI" id="CHEBI:32364"/>
        <dbReference type="ChEBI" id="CHEBI:57540"/>
        <dbReference type="ChEBI" id="CHEBI:57945"/>
        <dbReference type="ChEBI" id="CHEBI:58859"/>
        <dbReference type="EC" id="1.4.1.24"/>
    </reaction>
</comment>
<comment type="similarity">
    <text evidence="1">Belongs to the archaeal-type DHQ synthase family.</text>
</comment>
<feature type="chain" id="PRO_1000067069" description="3-dehydroquinate synthase">
    <location>
        <begin position="1"/>
        <end position="361"/>
    </location>
</feature>